<feature type="chain" id="PRO_0000137210" description="Translation initiation factor IF-2">
    <location>
        <begin position="1"/>
        <end position="949"/>
    </location>
</feature>
<feature type="domain" description="tr-type G">
    <location>
        <begin position="448"/>
        <end position="617"/>
    </location>
</feature>
<feature type="region of interest" description="Disordered" evidence="2">
    <location>
        <begin position="61"/>
        <end position="122"/>
    </location>
</feature>
<feature type="region of interest" description="Disordered" evidence="2">
    <location>
        <begin position="139"/>
        <end position="159"/>
    </location>
</feature>
<feature type="region of interest" description="Disordered" evidence="2">
    <location>
        <begin position="171"/>
        <end position="284"/>
    </location>
</feature>
<feature type="region of interest" description="G1" evidence="1">
    <location>
        <begin position="457"/>
        <end position="464"/>
    </location>
</feature>
<feature type="region of interest" description="G2" evidence="1">
    <location>
        <begin position="482"/>
        <end position="486"/>
    </location>
</feature>
<feature type="region of interest" description="G3" evidence="1">
    <location>
        <begin position="503"/>
        <end position="506"/>
    </location>
</feature>
<feature type="region of interest" description="G4" evidence="1">
    <location>
        <begin position="557"/>
        <end position="560"/>
    </location>
</feature>
<feature type="region of interest" description="G5" evidence="1">
    <location>
        <begin position="593"/>
        <end position="595"/>
    </location>
</feature>
<feature type="compositionally biased region" description="Basic and acidic residues" evidence="2">
    <location>
        <begin position="112"/>
        <end position="122"/>
    </location>
</feature>
<feature type="compositionally biased region" description="Basic and acidic residues" evidence="2">
    <location>
        <begin position="150"/>
        <end position="159"/>
    </location>
</feature>
<feature type="compositionally biased region" description="Low complexity" evidence="2">
    <location>
        <begin position="174"/>
        <end position="190"/>
    </location>
</feature>
<feature type="compositionally biased region" description="Basic and acidic residues" evidence="2">
    <location>
        <begin position="191"/>
        <end position="208"/>
    </location>
</feature>
<feature type="compositionally biased region" description="Basic residues" evidence="2">
    <location>
        <begin position="209"/>
        <end position="220"/>
    </location>
</feature>
<feature type="compositionally biased region" description="Basic and acidic residues" evidence="2">
    <location>
        <begin position="249"/>
        <end position="264"/>
    </location>
</feature>
<feature type="binding site" evidence="1">
    <location>
        <begin position="457"/>
        <end position="464"/>
    </location>
    <ligand>
        <name>GTP</name>
        <dbReference type="ChEBI" id="CHEBI:37565"/>
    </ligand>
</feature>
<feature type="binding site" evidence="1">
    <location>
        <begin position="503"/>
        <end position="507"/>
    </location>
    <ligand>
        <name>GTP</name>
        <dbReference type="ChEBI" id="CHEBI:37565"/>
    </ligand>
</feature>
<feature type="binding site" evidence="1">
    <location>
        <begin position="557"/>
        <end position="560"/>
    </location>
    <ligand>
        <name>GTP</name>
        <dbReference type="ChEBI" id="CHEBI:37565"/>
    </ligand>
</feature>
<gene>
    <name type="primary">infB</name>
    <name type="ordered locus">jhp_0377</name>
</gene>
<comment type="function">
    <text evidence="1">One of the essential components for the initiation of protein synthesis. Protects formylmethionyl-tRNA from spontaneous hydrolysis and promotes its binding to the 30S ribosomal subunits. Also involved in the hydrolysis of GTP during the formation of the 70S ribosomal complex (By similarity).</text>
</comment>
<comment type="subcellular location">
    <subcellularLocation>
        <location evidence="1">Cytoplasm</location>
    </subcellularLocation>
</comment>
<comment type="similarity">
    <text evidence="3">Belongs to the TRAFAC class translation factor GTPase superfamily. Classic translation factor GTPase family. IF-2 subfamily.</text>
</comment>
<sequence length="949" mass="105962">MSDMVDLKKFVTELGKTQKELKNVIEQAKDIGLELKTNFKMTPEQAGKLYKYIVDGIKEQIQANQPTKNPKQDNKDDLNTAATPKPLAKKASKTPKKEETKAQPKPKKTKEKKKEAPAPIIKKKEIEIVNTFENQTPLVENTPKAVSHSQIEKAKQKLQEIQKSREALNKLTQSNTNTTNNANSASNVSNAKKEISEVKKQEQEIKRHENIKRRTGFRVIKRNDETENETENSVTESKKPTQSAAAIFEDIKKEWQEKDKQETKKTKKPSKPKATPTAKNNKSHKIDFSDVRDFKGNDIYDDETDEILLFDLHEQDNLNKEEEEKEARQNINDRVRVQRKNPWMNEAGIKRQSKKKRVFRNDNSQKVIQSAIAIPEEVRVYEFAQKANLNLADVIKTLFNLGLMVTKNDFLDKDSIEILAEEFHLEISVQNTLEEFEVEEVLEGVKKERPPVVTIMGHVDHGKTSLLDKIRDKRVAHTEAGGITQHIGAYMVEKNNKWVSFIDTPGHEAFSQMRNRGAQVTDIAVIVIAADDGVKQQTIEALEHAKAANVPVIFAMNKMDKPNVNPDKLKAECAELGYNPVDWGGEHEFIPVSAKTGDGIDNLLETILIQADIMELKAIEEGSARAVVLEGSVEKGRGAVATVIVQSGTLSVGDSFFAETAFGKVRTMTDDQGKSIQNLKPSMVALITGLSEVPPAGSVLIGVENDSIARLQAQKRATYLRQKALSKSTKVSFDELSEMVANKELKNIPVIIKADTQGSLEAIKNSLLELNNEEVAIQVIHSGVGGITENDLSLVSSSEHAVILGFNIRPTGNVKNKAKEYNVSIKTYTVIYALIEGMRSLLLGLMSPIIEEEHTGQAEVRETFNIPKVGTIAGCVVSDGEIARGIKARLIRDGVVVHTGEILSLKRFKDDVKEVSKGYECGIMLDNYNEIKVGDVFETYKEIHKKRTL</sequence>
<keyword id="KW-0963">Cytoplasm</keyword>
<keyword id="KW-0342">GTP-binding</keyword>
<keyword id="KW-0396">Initiation factor</keyword>
<keyword id="KW-0547">Nucleotide-binding</keyword>
<keyword id="KW-0648">Protein biosynthesis</keyword>
<reference key="1">
    <citation type="journal article" date="1999" name="Nature">
        <title>Genomic sequence comparison of two unrelated isolates of the human gastric pathogen Helicobacter pylori.</title>
        <authorList>
            <person name="Alm R.A."/>
            <person name="Ling L.-S.L."/>
            <person name="Moir D.T."/>
            <person name="King B.L."/>
            <person name="Brown E.D."/>
            <person name="Doig P.C."/>
            <person name="Smith D.R."/>
            <person name="Noonan B."/>
            <person name="Guild B.C."/>
            <person name="deJonge B.L."/>
            <person name="Carmel G."/>
            <person name="Tummino P.J."/>
            <person name="Caruso A."/>
            <person name="Uria-Nickelsen M."/>
            <person name="Mills D.M."/>
            <person name="Ives C."/>
            <person name="Gibson R."/>
            <person name="Merberg D."/>
            <person name="Mills S.D."/>
            <person name="Jiang Q."/>
            <person name="Taylor D.E."/>
            <person name="Vovis G.F."/>
            <person name="Trust T.J."/>
        </authorList>
    </citation>
    <scope>NUCLEOTIDE SEQUENCE [LARGE SCALE GENOMIC DNA]</scope>
    <source>
        <strain>J99 / ATCC 700824</strain>
    </source>
</reference>
<proteinExistence type="inferred from homology"/>
<evidence type="ECO:0000250" key="1"/>
<evidence type="ECO:0000256" key="2">
    <source>
        <dbReference type="SAM" id="MobiDB-lite"/>
    </source>
</evidence>
<evidence type="ECO:0000305" key="3"/>
<name>IF2_HELPJ</name>
<protein>
    <recommendedName>
        <fullName>Translation initiation factor IF-2</fullName>
    </recommendedName>
</protein>
<organism>
    <name type="scientific">Helicobacter pylori (strain J99 / ATCC 700824)</name>
    <name type="common">Campylobacter pylori J99</name>
    <dbReference type="NCBI Taxonomy" id="85963"/>
    <lineage>
        <taxon>Bacteria</taxon>
        <taxon>Pseudomonadati</taxon>
        <taxon>Campylobacterota</taxon>
        <taxon>Epsilonproteobacteria</taxon>
        <taxon>Campylobacterales</taxon>
        <taxon>Helicobacteraceae</taxon>
        <taxon>Helicobacter</taxon>
    </lineage>
</organism>
<dbReference type="EMBL" id="AE001439">
    <property type="protein sequence ID" value="AAD05948.1"/>
    <property type="molecule type" value="Genomic_DNA"/>
</dbReference>
<dbReference type="PIR" id="E71940">
    <property type="entry name" value="E71940"/>
</dbReference>
<dbReference type="RefSeq" id="WP_001282226.1">
    <property type="nucleotide sequence ID" value="NC_000921.1"/>
</dbReference>
<dbReference type="SMR" id="Q9ZM46"/>
<dbReference type="KEGG" id="hpj:jhp_0377"/>
<dbReference type="eggNOG" id="COG0532">
    <property type="taxonomic scope" value="Bacteria"/>
</dbReference>
<dbReference type="Proteomes" id="UP000000804">
    <property type="component" value="Chromosome"/>
</dbReference>
<dbReference type="GO" id="GO:0005829">
    <property type="term" value="C:cytosol"/>
    <property type="evidence" value="ECO:0007669"/>
    <property type="project" value="TreeGrafter"/>
</dbReference>
<dbReference type="GO" id="GO:0005525">
    <property type="term" value="F:GTP binding"/>
    <property type="evidence" value="ECO:0007669"/>
    <property type="project" value="UniProtKB-KW"/>
</dbReference>
<dbReference type="GO" id="GO:0003924">
    <property type="term" value="F:GTPase activity"/>
    <property type="evidence" value="ECO:0007669"/>
    <property type="project" value="UniProtKB-UniRule"/>
</dbReference>
<dbReference type="GO" id="GO:0003743">
    <property type="term" value="F:translation initiation factor activity"/>
    <property type="evidence" value="ECO:0007669"/>
    <property type="project" value="UniProtKB-UniRule"/>
</dbReference>
<dbReference type="CDD" id="cd01887">
    <property type="entry name" value="IF2_eIF5B"/>
    <property type="match status" value="1"/>
</dbReference>
<dbReference type="CDD" id="cd03702">
    <property type="entry name" value="IF2_mtIF2_II"/>
    <property type="match status" value="1"/>
</dbReference>
<dbReference type="CDD" id="cd03692">
    <property type="entry name" value="mtIF2_IVc"/>
    <property type="match status" value="1"/>
</dbReference>
<dbReference type="FunFam" id="2.40.30.10:FF:000008">
    <property type="entry name" value="Translation initiation factor IF-2"/>
    <property type="match status" value="1"/>
</dbReference>
<dbReference type="FunFam" id="2.40.30.10:FF:000054">
    <property type="entry name" value="Translation initiation factor IF-2"/>
    <property type="match status" value="1"/>
</dbReference>
<dbReference type="FunFam" id="3.40.50.10050:FF:000001">
    <property type="entry name" value="Translation initiation factor IF-2"/>
    <property type="match status" value="1"/>
</dbReference>
<dbReference type="FunFam" id="3.40.50.300:FF:000019">
    <property type="entry name" value="Translation initiation factor IF-2"/>
    <property type="match status" value="1"/>
</dbReference>
<dbReference type="Gene3D" id="3.40.50.300">
    <property type="entry name" value="P-loop containing nucleotide triphosphate hydrolases"/>
    <property type="match status" value="1"/>
</dbReference>
<dbReference type="Gene3D" id="2.40.30.10">
    <property type="entry name" value="Translation factors"/>
    <property type="match status" value="2"/>
</dbReference>
<dbReference type="Gene3D" id="3.40.50.10050">
    <property type="entry name" value="Translation initiation factor IF- 2, domain 3"/>
    <property type="match status" value="1"/>
</dbReference>
<dbReference type="HAMAP" id="MF_00100_B">
    <property type="entry name" value="IF_2_B"/>
    <property type="match status" value="1"/>
</dbReference>
<dbReference type="InterPro" id="IPR053905">
    <property type="entry name" value="EF-G-like_DII"/>
</dbReference>
<dbReference type="InterPro" id="IPR044145">
    <property type="entry name" value="IF2_II"/>
</dbReference>
<dbReference type="InterPro" id="IPR006847">
    <property type="entry name" value="IF2_N"/>
</dbReference>
<dbReference type="InterPro" id="IPR027417">
    <property type="entry name" value="P-loop_NTPase"/>
</dbReference>
<dbReference type="InterPro" id="IPR005225">
    <property type="entry name" value="Small_GTP-bd"/>
</dbReference>
<dbReference type="InterPro" id="IPR000795">
    <property type="entry name" value="T_Tr_GTP-bd_dom"/>
</dbReference>
<dbReference type="InterPro" id="IPR000178">
    <property type="entry name" value="TF_IF2_bacterial-like"/>
</dbReference>
<dbReference type="InterPro" id="IPR015760">
    <property type="entry name" value="TIF_IF2"/>
</dbReference>
<dbReference type="InterPro" id="IPR023115">
    <property type="entry name" value="TIF_IF2_dom3"/>
</dbReference>
<dbReference type="InterPro" id="IPR036925">
    <property type="entry name" value="TIF_IF2_dom3_sf"/>
</dbReference>
<dbReference type="InterPro" id="IPR009000">
    <property type="entry name" value="Transl_B-barrel_sf"/>
</dbReference>
<dbReference type="NCBIfam" id="TIGR00487">
    <property type="entry name" value="IF-2"/>
    <property type="match status" value="1"/>
</dbReference>
<dbReference type="NCBIfam" id="TIGR00231">
    <property type="entry name" value="small_GTP"/>
    <property type="match status" value="1"/>
</dbReference>
<dbReference type="PANTHER" id="PTHR43381:SF5">
    <property type="entry name" value="TR-TYPE G DOMAIN-CONTAINING PROTEIN"/>
    <property type="match status" value="1"/>
</dbReference>
<dbReference type="PANTHER" id="PTHR43381">
    <property type="entry name" value="TRANSLATION INITIATION FACTOR IF-2-RELATED"/>
    <property type="match status" value="1"/>
</dbReference>
<dbReference type="Pfam" id="PF22042">
    <property type="entry name" value="EF-G_D2"/>
    <property type="match status" value="1"/>
</dbReference>
<dbReference type="Pfam" id="PF00009">
    <property type="entry name" value="GTP_EFTU"/>
    <property type="match status" value="1"/>
</dbReference>
<dbReference type="Pfam" id="PF11987">
    <property type="entry name" value="IF-2"/>
    <property type="match status" value="1"/>
</dbReference>
<dbReference type="Pfam" id="PF04760">
    <property type="entry name" value="IF2_N"/>
    <property type="match status" value="1"/>
</dbReference>
<dbReference type="SUPFAM" id="SSF52156">
    <property type="entry name" value="Initiation factor IF2/eIF5b, domain 3"/>
    <property type="match status" value="1"/>
</dbReference>
<dbReference type="SUPFAM" id="SSF52540">
    <property type="entry name" value="P-loop containing nucleoside triphosphate hydrolases"/>
    <property type="match status" value="1"/>
</dbReference>
<dbReference type="SUPFAM" id="SSF50447">
    <property type="entry name" value="Translation proteins"/>
    <property type="match status" value="2"/>
</dbReference>
<dbReference type="PROSITE" id="PS51722">
    <property type="entry name" value="G_TR_2"/>
    <property type="match status" value="1"/>
</dbReference>
<dbReference type="PROSITE" id="PS01176">
    <property type="entry name" value="IF2"/>
    <property type="match status" value="1"/>
</dbReference>
<accession>Q9ZM46</accession>